<feature type="chain" id="PRO_1000093014" description="S-adenosylmethionine synthase">
    <location>
        <begin position="1"/>
        <end position="388"/>
    </location>
</feature>
<feature type="region of interest" description="Flexible loop" evidence="1">
    <location>
        <begin position="100"/>
        <end position="110"/>
    </location>
</feature>
<feature type="binding site" description="in other chain" evidence="1">
    <location>
        <position position="16"/>
    </location>
    <ligand>
        <name>ATP</name>
        <dbReference type="ChEBI" id="CHEBI:30616"/>
        <note>ligand shared between two neighboring subunits</note>
    </ligand>
</feature>
<feature type="binding site" evidence="1">
    <location>
        <position position="18"/>
    </location>
    <ligand>
        <name>Mg(2+)</name>
        <dbReference type="ChEBI" id="CHEBI:18420"/>
    </ligand>
</feature>
<feature type="binding site" evidence="1">
    <location>
        <position position="44"/>
    </location>
    <ligand>
        <name>K(+)</name>
        <dbReference type="ChEBI" id="CHEBI:29103"/>
    </ligand>
</feature>
<feature type="binding site" description="in other chain" evidence="1">
    <location>
        <position position="57"/>
    </location>
    <ligand>
        <name>L-methionine</name>
        <dbReference type="ChEBI" id="CHEBI:57844"/>
        <note>ligand shared between two neighboring subunits</note>
    </ligand>
</feature>
<feature type="binding site" description="in other chain" evidence="1">
    <location>
        <position position="100"/>
    </location>
    <ligand>
        <name>L-methionine</name>
        <dbReference type="ChEBI" id="CHEBI:57844"/>
        <note>ligand shared between two neighboring subunits</note>
    </ligand>
</feature>
<feature type="binding site" description="in other chain" evidence="1">
    <location>
        <begin position="165"/>
        <end position="167"/>
    </location>
    <ligand>
        <name>ATP</name>
        <dbReference type="ChEBI" id="CHEBI:30616"/>
        <note>ligand shared between two neighboring subunits</note>
    </ligand>
</feature>
<feature type="binding site" evidence="1">
    <location>
        <position position="240"/>
    </location>
    <ligand>
        <name>ATP</name>
        <dbReference type="ChEBI" id="CHEBI:30616"/>
        <note>ligand shared between two neighboring subunits</note>
    </ligand>
</feature>
<feature type="binding site" evidence="1">
    <location>
        <position position="240"/>
    </location>
    <ligand>
        <name>L-methionine</name>
        <dbReference type="ChEBI" id="CHEBI:57844"/>
        <note>ligand shared between two neighboring subunits</note>
    </ligand>
</feature>
<feature type="binding site" description="in other chain" evidence="1">
    <location>
        <begin position="246"/>
        <end position="247"/>
    </location>
    <ligand>
        <name>ATP</name>
        <dbReference type="ChEBI" id="CHEBI:30616"/>
        <note>ligand shared between two neighboring subunits</note>
    </ligand>
</feature>
<feature type="binding site" evidence="1">
    <location>
        <position position="263"/>
    </location>
    <ligand>
        <name>ATP</name>
        <dbReference type="ChEBI" id="CHEBI:30616"/>
        <note>ligand shared between two neighboring subunits</note>
    </ligand>
</feature>
<feature type="binding site" evidence="1">
    <location>
        <position position="267"/>
    </location>
    <ligand>
        <name>ATP</name>
        <dbReference type="ChEBI" id="CHEBI:30616"/>
        <note>ligand shared between two neighboring subunits</note>
    </ligand>
</feature>
<feature type="binding site" description="in other chain" evidence="1">
    <location>
        <position position="271"/>
    </location>
    <ligand>
        <name>L-methionine</name>
        <dbReference type="ChEBI" id="CHEBI:57844"/>
        <note>ligand shared between two neighboring subunits</note>
    </ligand>
</feature>
<name>METK_ACIBS</name>
<keyword id="KW-0067">ATP-binding</keyword>
<keyword id="KW-0963">Cytoplasm</keyword>
<keyword id="KW-0460">Magnesium</keyword>
<keyword id="KW-0479">Metal-binding</keyword>
<keyword id="KW-0547">Nucleotide-binding</keyword>
<keyword id="KW-0554">One-carbon metabolism</keyword>
<keyword id="KW-0630">Potassium</keyword>
<keyword id="KW-0808">Transferase</keyword>
<comment type="function">
    <text evidence="1">Catalyzes the formation of S-adenosylmethionine (AdoMet) from methionine and ATP. The overall synthetic reaction is composed of two sequential steps, AdoMet formation and the subsequent tripolyphosphate hydrolysis which occurs prior to release of AdoMet from the enzyme.</text>
</comment>
<comment type="catalytic activity">
    <reaction evidence="1">
        <text>L-methionine + ATP + H2O = S-adenosyl-L-methionine + phosphate + diphosphate</text>
        <dbReference type="Rhea" id="RHEA:21080"/>
        <dbReference type="ChEBI" id="CHEBI:15377"/>
        <dbReference type="ChEBI" id="CHEBI:30616"/>
        <dbReference type="ChEBI" id="CHEBI:33019"/>
        <dbReference type="ChEBI" id="CHEBI:43474"/>
        <dbReference type="ChEBI" id="CHEBI:57844"/>
        <dbReference type="ChEBI" id="CHEBI:59789"/>
        <dbReference type="EC" id="2.5.1.6"/>
    </reaction>
</comment>
<comment type="cofactor">
    <cofactor evidence="1">
        <name>Mg(2+)</name>
        <dbReference type="ChEBI" id="CHEBI:18420"/>
    </cofactor>
    <text evidence="1">Binds 2 divalent ions per subunit.</text>
</comment>
<comment type="cofactor">
    <cofactor evidence="1">
        <name>K(+)</name>
        <dbReference type="ChEBI" id="CHEBI:29103"/>
    </cofactor>
    <text evidence="1">Binds 1 potassium ion per subunit.</text>
</comment>
<comment type="pathway">
    <text evidence="1">Amino-acid biosynthesis; S-adenosyl-L-methionine biosynthesis; S-adenosyl-L-methionine from L-methionine: step 1/1.</text>
</comment>
<comment type="subunit">
    <text evidence="1">Homotetramer; dimer of dimers.</text>
</comment>
<comment type="subcellular location">
    <subcellularLocation>
        <location evidence="1">Cytoplasm</location>
    </subcellularLocation>
</comment>
<comment type="similarity">
    <text evidence="1">Belongs to the AdoMet synthase family.</text>
</comment>
<gene>
    <name evidence="1" type="primary">metK</name>
    <name type="ordered locus">ABSDF2121</name>
</gene>
<evidence type="ECO:0000255" key="1">
    <source>
        <dbReference type="HAMAP-Rule" id="MF_00086"/>
    </source>
</evidence>
<sequence>MREYAVFTSESVSEGHPDKMADQISDAILDAILKEDPYARVACETLVKTGAVVLAGEITTTANIDVEAVVRQTVNGIGYHHSDLGFDGSTCAVINMIGKQSPEIAQGVDRQKPEDQGAGDQGLMFGYASRETDVLMPAPISYAHRLMERQAELRRSGALPWLRPDAKSQVTFAYENGKPVRLDAVVLSTQHDPEITQTQLKEAVIEEIIKPIIPAEMFHAATKFHINPTGMFVIGGPVGDCGLTGRKIIVDTYGGMARHGGGAFSGKDPSKVDRSAAYAGRYVAKNIVAAGLADKCEIQVSYAIGVAEPTSISINTFGTAKVSDELIIQLVREHFDLRPFGITRMLNLIQPMYKQTAAYGHFGREGSDTAFTWEKTDKVEALKDAAGL</sequence>
<proteinExistence type="inferred from homology"/>
<accession>B0VR30</accession>
<dbReference type="EC" id="2.5.1.6" evidence="1"/>
<dbReference type="EMBL" id="CU468230">
    <property type="protein sequence ID" value="CAP01449.1"/>
    <property type="molecule type" value="Genomic_DNA"/>
</dbReference>
<dbReference type="SMR" id="B0VR30"/>
<dbReference type="KEGG" id="abm:ABSDF2121"/>
<dbReference type="HOGENOM" id="CLU_041802_1_1_6"/>
<dbReference type="UniPathway" id="UPA00315">
    <property type="reaction ID" value="UER00080"/>
</dbReference>
<dbReference type="Proteomes" id="UP000001741">
    <property type="component" value="Chromosome"/>
</dbReference>
<dbReference type="GO" id="GO:0005737">
    <property type="term" value="C:cytoplasm"/>
    <property type="evidence" value="ECO:0007669"/>
    <property type="project" value="UniProtKB-SubCell"/>
</dbReference>
<dbReference type="GO" id="GO:0005524">
    <property type="term" value="F:ATP binding"/>
    <property type="evidence" value="ECO:0007669"/>
    <property type="project" value="UniProtKB-UniRule"/>
</dbReference>
<dbReference type="GO" id="GO:0000287">
    <property type="term" value="F:magnesium ion binding"/>
    <property type="evidence" value="ECO:0007669"/>
    <property type="project" value="UniProtKB-UniRule"/>
</dbReference>
<dbReference type="GO" id="GO:0004478">
    <property type="term" value="F:methionine adenosyltransferase activity"/>
    <property type="evidence" value="ECO:0007669"/>
    <property type="project" value="UniProtKB-UniRule"/>
</dbReference>
<dbReference type="GO" id="GO:0006730">
    <property type="term" value="P:one-carbon metabolic process"/>
    <property type="evidence" value="ECO:0007669"/>
    <property type="project" value="UniProtKB-KW"/>
</dbReference>
<dbReference type="GO" id="GO:0006556">
    <property type="term" value="P:S-adenosylmethionine biosynthetic process"/>
    <property type="evidence" value="ECO:0007669"/>
    <property type="project" value="UniProtKB-UniRule"/>
</dbReference>
<dbReference type="CDD" id="cd18079">
    <property type="entry name" value="S-AdoMet_synt"/>
    <property type="match status" value="1"/>
</dbReference>
<dbReference type="FunFam" id="3.30.300.10:FF:000003">
    <property type="entry name" value="S-adenosylmethionine synthase"/>
    <property type="match status" value="1"/>
</dbReference>
<dbReference type="Gene3D" id="3.30.300.10">
    <property type="match status" value="3"/>
</dbReference>
<dbReference type="HAMAP" id="MF_00086">
    <property type="entry name" value="S_AdoMet_synth1"/>
    <property type="match status" value="1"/>
</dbReference>
<dbReference type="InterPro" id="IPR022631">
    <property type="entry name" value="ADOMET_SYNTHASE_CS"/>
</dbReference>
<dbReference type="InterPro" id="IPR022630">
    <property type="entry name" value="S-AdoMet_synt_C"/>
</dbReference>
<dbReference type="InterPro" id="IPR022629">
    <property type="entry name" value="S-AdoMet_synt_central"/>
</dbReference>
<dbReference type="InterPro" id="IPR022628">
    <property type="entry name" value="S-AdoMet_synt_N"/>
</dbReference>
<dbReference type="InterPro" id="IPR002133">
    <property type="entry name" value="S-AdoMet_synthetase"/>
</dbReference>
<dbReference type="InterPro" id="IPR022636">
    <property type="entry name" value="S-AdoMet_synthetase_sfam"/>
</dbReference>
<dbReference type="NCBIfam" id="TIGR01034">
    <property type="entry name" value="metK"/>
    <property type="match status" value="1"/>
</dbReference>
<dbReference type="PANTHER" id="PTHR11964">
    <property type="entry name" value="S-ADENOSYLMETHIONINE SYNTHETASE"/>
    <property type="match status" value="1"/>
</dbReference>
<dbReference type="Pfam" id="PF02773">
    <property type="entry name" value="S-AdoMet_synt_C"/>
    <property type="match status" value="1"/>
</dbReference>
<dbReference type="Pfam" id="PF02772">
    <property type="entry name" value="S-AdoMet_synt_M"/>
    <property type="match status" value="1"/>
</dbReference>
<dbReference type="Pfam" id="PF00438">
    <property type="entry name" value="S-AdoMet_synt_N"/>
    <property type="match status" value="1"/>
</dbReference>
<dbReference type="PIRSF" id="PIRSF000497">
    <property type="entry name" value="MAT"/>
    <property type="match status" value="1"/>
</dbReference>
<dbReference type="SUPFAM" id="SSF55973">
    <property type="entry name" value="S-adenosylmethionine synthetase"/>
    <property type="match status" value="3"/>
</dbReference>
<dbReference type="PROSITE" id="PS00376">
    <property type="entry name" value="ADOMET_SYNTHASE_1"/>
    <property type="match status" value="1"/>
</dbReference>
<dbReference type="PROSITE" id="PS00377">
    <property type="entry name" value="ADOMET_SYNTHASE_2"/>
    <property type="match status" value="1"/>
</dbReference>
<reference key="1">
    <citation type="journal article" date="2008" name="PLoS ONE">
        <title>Comparative analysis of Acinetobacters: three genomes for three lifestyles.</title>
        <authorList>
            <person name="Vallenet D."/>
            <person name="Nordmann P."/>
            <person name="Barbe V."/>
            <person name="Poirel L."/>
            <person name="Mangenot S."/>
            <person name="Bataille E."/>
            <person name="Dossat C."/>
            <person name="Gas S."/>
            <person name="Kreimeyer A."/>
            <person name="Lenoble P."/>
            <person name="Oztas S."/>
            <person name="Poulain J."/>
            <person name="Segurens B."/>
            <person name="Robert C."/>
            <person name="Abergel C."/>
            <person name="Claverie J.-M."/>
            <person name="Raoult D."/>
            <person name="Medigue C."/>
            <person name="Weissenbach J."/>
            <person name="Cruveiller S."/>
        </authorList>
    </citation>
    <scope>NUCLEOTIDE SEQUENCE [LARGE SCALE GENOMIC DNA]</scope>
    <source>
        <strain>SDF</strain>
    </source>
</reference>
<organism>
    <name type="scientific">Acinetobacter baumannii (strain SDF)</name>
    <dbReference type="NCBI Taxonomy" id="509170"/>
    <lineage>
        <taxon>Bacteria</taxon>
        <taxon>Pseudomonadati</taxon>
        <taxon>Pseudomonadota</taxon>
        <taxon>Gammaproteobacteria</taxon>
        <taxon>Moraxellales</taxon>
        <taxon>Moraxellaceae</taxon>
        <taxon>Acinetobacter</taxon>
        <taxon>Acinetobacter calcoaceticus/baumannii complex</taxon>
    </lineage>
</organism>
<protein>
    <recommendedName>
        <fullName evidence="1">S-adenosylmethionine synthase</fullName>
        <shortName evidence="1">AdoMet synthase</shortName>
        <ecNumber evidence="1">2.5.1.6</ecNumber>
    </recommendedName>
    <alternativeName>
        <fullName evidence="1">MAT</fullName>
    </alternativeName>
    <alternativeName>
        <fullName evidence="1">Methionine adenosyltransferase</fullName>
    </alternativeName>
</protein>